<comment type="function">
    <text evidence="1">Bidirectionally degrades single-stranded DNA into large acid-insoluble oligonucleotides, which are then degraded further into small acid-soluble oligonucleotides.</text>
</comment>
<comment type="catalytic activity">
    <reaction evidence="1">
        <text>Exonucleolytic cleavage in either 5'- to 3'- or 3'- to 5'-direction to yield nucleoside 5'-phosphates.</text>
        <dbReference type="EC" id="3.1.11.6"/>
    </reaction>
</comment>
<comment type="subunit">
    <text evidence="1">Heterooligomer composed of large and small subunits.</text>
</comment>
<comment type="subcellular location">
    <subcellularLocation>
        <location evidence="1">Cytoplasm</location>
    </subcellularLocation>
</comment>
<comment type="similarity">
    <text evidence="1">Belongs to the XseA family.</text>
</comment>
<organism>
    <name type="scientific">Listeria welshimeri serovar 6b (strain ATCC 35897 / DSM 20650 / CCUG 15529 / CIP 8149 / NCTC 11857 / SLCC 5334 / V8)</name>
    <dbReference type="NCBI Taxonomy" id="386043"/>
    <lineage>
        <taxon>Bacteria</taxon>
        <taxon>Bacillati</taxon>
        <taxon>Bacillota</taxon>
        <taxon>Bacilli</taxon>
        <taxon>Bacillales</taxon>
        <taxon>Listeriaceae</taxon>
        <taxon>Listeria</taxon>
    </lineage>
</organism>
<protein>
    <recommendedName>
        <fullName evidence="1">Exodeoxyribonuclease 7 large subunit</fullName>
        <ecNumber evidence="1">3.1.11.6</ecNumber>
    </recommendedName>
    <alternativeName>
        <fullName evidence="1">Exodeoxyribonuclease VII large subunit</fullName>
        <shortName evidence="1">Exonuclease VII large subunit</shortName>
    </alternativeName>
</protein>
<sequence length="450" mass="51319">MEQDKYLTVAAITKYIEKKFDVDPYMKQVFVRGEISNLKQPASGHLYFTVKDEFAMLRSVMFQKAVQKIGFVPEDGMNVLITGRIGVFTKAGRYQFYAEHMEPDGVGALYIQLEQLKTQLEKEGLFAETHKKVLPSFPSKVAVVTSKTGAAVRDILTTIHRRMPSVEVIVYPTIVQGEKSAQKIVENIGRINQRNDIDVMIIGRGGGSLEELWAFNEEPVVRAVYDSDVPVISAVGHETDFALSDFSADVRAATPTAAAELAVPDYRDLEERLAERKYRLLTVTRQLLERKERTLEQLKQHLILNGPKHQLEQQIERTDYFSERLKNAFSKQVLLKQTMFNRLNDRLHYYHPRKEIELQNEQLAVRKQALEKAMKRQLKDKQQVFVRQIEALEHLSPLALLKRGFGVTYKEGQLVKSVQDLEVGDDIQVKMQGGHIEASITAKEEDTSGN</sequence>
<dbReference type="EC" id="3.1.11.6" evidence="1"/>
<dbReference type="EMBL" id="AM263198">
    <property type="protein sequence ID" value="CAK20794.1"/>
    <property type="molecule type" value="Genomic_DNA"/>
</dbReference>
<dbReference type="RefSeq" id="WP_011702175.1">
    <property type="nucleotide sequence ID" value="NC_008555.1"/>
</dbReference>
<dbReference type="SMR" id="A0AIG2"/>
<dbReference type="STRING" id="386043.lwe1376"/>
<dbReference type="GeneID" id="61189252"/>
<dbReference type="KEGG" id="lwe:lwe1376"/>
<dbReference type="eggNOG" id="COG1570">
    <property type="taxonomic scope" value="Bacteria"/>
</dbReference>
<dbReference type="HOGENOM" id="CLU_023625_3_1_9"/>
<dbReference type="OrthoDB" id="9802795at2"/>
<dbReference type="Proteomes" id="UP000000779">
    <property type="component" value="Chromosome"/>
</dbReference>
<dbReference type="GO" id="GO:0005737">
    <property type="term" value="C:cytoplasm"/>
    <property type="evidence" value="ECO:0007669"/>
    <property type="project" value="UniProtKB-SubCell"/>
</dbReference>
<dbReference type="GO" id="GO:0009318">
    <property type="term" value="C:exodeoxyribonuclease VII complex"/>
    <property type="evidence" value="ECO:0007669"/>
    <property type="project" value="InterPro"/>
</dbReference>
<dbReference type="GO" id="GO:0008855">
    <property type="term" value="F:exodeoxyribonuclease VII activity"/>
    <property type="evidence" value="ECO:0007669"/>
    <property type="project" value="UniProtKB-UniRule"/>
</dbReference>
<dbReference type="GO" id="GO:0003676">
    <property type="term" value="F:nucleic acid binding"/>
    <property type="evidence" value="ECO:0007669"/>
    <property type="project" value="InterPro"/>
</dbReference>
<dbReference type="GO" id="GO:0006308">
    <property type="term" value="P:DNA catabolic process"/>
    <property type="evidence" value="ECO:0007669"/>
    <property type="project" value="UniProtKB-UniRule"/>
</dbReference>
<dbReference type="CDD" id="cd04489">
    <property type="entry name" value="ExoVII_LU_OBF"/>
    <property type="match status" value="1"/>
</dbReference>
<dbReference type="HAMAP" id="MF_00378">
    <property type="entry name" value="Exonuc_7_L"/>
    <property type="match status" value="1"/>
</dbReference>
<dbReference type="InterPro" id="IPR003753">
    <property type="entry name" value="Exonuc_VII_L"/>
</dbReference>
<dbReference type="InterPro" id="IPR020579">
    <property type="entry name" value="Exonuc_VII_lsu_C"/>
</dbReference>
<dbReference type="InterPro" id="IPR025824">
    <property type="entry name" value="OB-fold_nuc-bd_dom"/>
</dbReference>
<dbReference type="NCBIfam" id="TIGR00237">
    <property type="entry name" value="xseA"/>
    <property type="match status" value="1"/>
</dbReference>
<dbReference type="PANTHER" id="PTHR30008">
    <property type="entry name" value="EXODEOXYRIBONUCLEASE 7 LARGE SUBUNIT"/>
    <property type="match status" value="1"/>
</dbReference>
<dbReference type="PANTHER" id="PTHR30008:SF0">
    <property type="entry name" value="EXODEOXYRIBONUCLEASE 7 LARGE SUBUNIT"/>
    <property type="match status" value="1"/>
</dbReference>
<dbReference type="Pfam" id="PF02601">
    <property type="entry name" value="Exonuc_VII_L"/>
    <property type="match status" value="1"/>
</dbReference>
<dbReference type="Pfam" id="PF13742">
    <property type="entry name" value="tRNA_anti_2"/>
    <property type="match status" value="1"/>
</dbReference>
<accession>A0AIG2</accession>
<proteinExistence type="inferred from homology"/>
<keyword id="KW-0963">Cytoplasm</keyword>
<keyword id="KW-0269">Exonuclease</keyword>
<keyword id="KW-0378">Hydrolase</keyword>
<keyword id="KW-0540">Nuclease</keyword>
<name>EX7L_LISW6</name>
<gene>
    <name evidence="1" type="primary">xseA</name>
    <name type="ordered locus">lwe1376</name>
</gene>
<feature type="chain" id="PRO_0000303797" description="Exodeoxyribonuclease 7 large subunit">
    <location>
        <begin position="1"/>
        <end position="450"/>
    </location>
</feature>
<evidence type="ECO:0000255" key="1">
    <source>
        <dbReference type="HAMAP-Rule" id="MF_00378"/>
    </source>
</evidence>
<reference key="1">
    <citation type="journal article" date="2006" name="J. Bacteriol.">
        <title>Whole-genome sequence of Listeria welshimeri reveals common steps in genome reduction with Listeria innocua as compared to Listeria monocytogenes.</title>
        <authorList>
            <person name="Hain T."/>
            <person name="Steinweg C."/>
            <person name="Kuenne C.T."/>
            <person name="Billion A."/>
            <person name="Ghai R."/>
            <person name="Chatterjee S.S."/>
            <person name="Domann E."/>
            <person name="Kaerst U."/>
            <person name="Goesmann A."/>
            <person name="Bekel T."/>
            <person name="Bartels D."/>
            <person name="Kaiser O."/>
            <person name="Meyer F."/>
            <person name="Puehler A."/>
            <person name="Weisshaar B."/>
            <person name="Wehland J."/>
            <person name="Liang C."/>
            <person name="Dandekar T."/>
            <person name="Lampidis R."/>
            <person name="Kreft J."/>
            <person name="Goebel W."/>
            <person name="Chakraborty T."/>
        </authorList>
    </citation>
    <scope>NUCLEOTIDE SEQUENCE [LARGE SCALE GENOMIC DNA]</scope>
    <source>
        <strain>ATCC 35897 / DSM 20650 / CCUG 15529 / CIP 8149 / NCTC 11857 / SLCC 5334 / V8</strain>
    </source>
</reference>